<organism>
    <name type="scientific">Yersinia pseudotuberculosis serotype O:3 (strain YPIII)</name>
    <dbReference type="NCBI Taxonomy" id="502800"/>
    <lineage>
        <taxon>Bacteria</taxon>
        <taxon>Pseudomonadati</taxon>
        <taxon>Pseudomonadota</taxon>
        <taxon>Gammaproteobacteria</taxon>
        <taxon>Enterobacterales</taxon>
        <taxon>Yersiniaceae</taxon>
        <taxon>Yersinia</taxon>
    </lineage>
</organism>
<name>TRMD_YERPY</name>
<reference key="1">
    <citation type="submission" date="2008-02" db="EMBL/GenBank/DDBJ databases">
        <title>Complete sequence of Yersinia pseudotuberculosis YPIII.</title>
        <authorList>
            <consortium name="US DOE Joint Genome Institute"/>
            <person name="Copeland A."/>
            <person name="Lucas S."/>
            <person name="Lapidus A."/>
            <person name="Glavina del Rio T."/>
            <person name="Dalin E."/>
            <person name="Tice H."/>
            <person name="Bruce D."/>
            <person name="Goodwin L."/>
            <person name="Pitluck S."/>
            <person name="Munk A.C."/>
            <person name="Brettin T."/>
            <person name="Detter J.C."/>
            <person name="Han C."/>
            <person name="Tapia R."/>
            <person name="Schmutz J."/>
            <person name="Larimer F."/>
            <person name="Land M."/>
            <person name="Hauser L."/>
            <person name="Challacombe J.F."/>
            <person name="Green L."/>
            <person name="Lindler L.E."/>
            <person name="Nikolich M.P."/>
            <person name="Richardson P."/>
        </authorList>
    </citation>
    <scope>NUCLEOTIDE SEQUENCE [LARGE SCALE GENOMIC DNA]</scope>
    <source>
        <strain>YPIII</strain>
    </source>
</reference>
<protein>
    <recommendedName>
        <fullName evidence="1">tRNA (guanine-N(1)-)-methyltransferase</fullName>
        <ecNumber evidence="1">2.1.1.228</ecNumber>
    </recommendedName>
    <alternativeName>
        <fullName evidence="1">M1G-methyltransferase</fullName>
    </alternativeName>
    <alternativeName>
        <fullName evidence="1">tRNA [GM37] methyltransferase</fullName>
    </alternativeName>
</protein>
<comment type="function">
    <text evidence="1">Specifically methylates guanosine-37 in various tRNAs.</text>
</comment>
<comment type="catalytic activity">
    <reaction evidence="1">
        <text>guanosine(37) in tRNA + S-adenosyl-L-methionine = N(1)-methylguanosine(37) in tRNA + S-adenosyl-L-homocysteine + H(+)</text>
        <dbReference type="Rhea" id="RHEA:36899"/>
        <dbReference type="Rhea" id="RHEA-COMP:10145"/>
        <dbReference type="Rhea" id="RHEA-COMP:10147"/>
        <dbReference type="ChEBI" id="CHEBI:15378"/>
        <dbReference type="ChEBI" id="CHEBI:57856"/>
        <dbReference type="ChEBI" id="CHEBI:59789"/>
        <dbReference type="ChEBI" id="CHEBI:73542"/>
        <dbReference type="ChEBI" id="CHEBI:74269"/>
        <dbReference type="EC" id="2.1.1.228"/>
    </reaction>
</comment>
<comment type="subunit">
    <text evidence="1">Homodimer.</text>
</comment>
<comment type="subcellular location">
    <subcellularLocation>
        <location evidence="1">Cytoplasm</location>
    </subcellularLocation>
</comment>
<comment type="similarity">
    <text evidence="1">Belongs to the RNA methyltransferase TrmD family.</text>
</comment>
<feature type="chain" id="PRO_1000130229" description="tRNA (guanine-N(1)-)-methyltransferase">
    <location>
        <begin position="1"/>
        <end position="246"/>
    </location>
</feature>
<feature type="binding site" evidence="1">
    <location>
        <position position="113"/>
    </location>
    <ligand>
        <name>S-adenosyl-L-methionine</name>
        <dbReference type="ChEBI" id="CHEBI:59789"/>
    </ligand>
</feature>
<feature type="binding site" evidence="1">
    <location>
        <begin position="133"/>
        <end position="138"/>
    </location>
    <ligand>
        <name>S-adenosyl-L-methionine</name>
        <dbReference type="ChEBI" id="CHEBI:59789"/>
    </ligand>
</feature>
<evidence type="ECO:0000255" key="1">
    <source>
        <dbReference type="HAMAP-Rule" id="MF_00605"/>
    </source>
</evidence>
<proteinExistence type="inferred from homology"/>
<gene>
    <name evidence="1" type="primary">trmD</name>
    <name type="ordered locus">YPK_3362</name>
</gene>
<sequence>MWIGVISLFPEMFRAITDYGVTGRAVKNGLLSVQCWSPRDFTYDRHRTVDDRPYGGGPGMLMMVQPLREAIHAAKAAAGEGAKVIYLSPQGRKLDQQGVCELAMNQKMILVCGRYEGVDERVIKTEIDEEWSIGDYVLSGGELPAMTLIDSVSRFIPGVLGHHASAEEDSFVDGLLDCPHYTRPEVLEGMEVPPVLLSGNHAEIRRWRLKQSLGRTWLRRPELLESLALTDEQMVLLAEFQREHKP</sequence>
<accession>B1JJ89</accession>
<dbReference type="EC" id="2.1.1.228" evidence="1"/>
<dbReference type="EMBL" id="CP000950">
    <property type="protein sequence ID" value="ACA69629.1"/>
    <property type="molecule type" value="Genomic_DNA"/>
</dbReference>
<dbReference type="RefSeq" id="WP_002222284.1">
    <property type="nucleotide sequence ID" value="NZ_CP009792.1"/>
</dbReference>
<dbReference type="SMR" id="B1JJ89"/>
<dbReference type="GeneID" id="57975424"/>
<dbReference type="KEGG" id="ypy:YPK_3362"/>
<dbReference type="PATRIC" id="fig|502800.11.peg.4097"/>
<dbReference type="GO" id="GO:0005829">
    <property type="term" value="C:cytosol"/>
    <property type="evidence" value="ECO:0007669"/>
    <property type="project" value="TreeGrafter"/>
</dbReference>
<dbReference type="GO" id="GO:0052906">
    <property type="term" value="F:tRNA (guanine(37)-N1)-methyltransferase activity"/>
    <property type="evidence" value="ECO:0007669"/>
    <property type="project" value="UniProtKB-UniRule"/>
</dbReference>
<dbReference type="GO" id="GO:0002939">
    <property type="term" value="P:tRNA N1-guanine methylation"/>
    <property type="evidence" value="ECO:0007669"/>
    <property type="project" value="TreeGrafter"/>
</dbReference>
<dbReference type="CDD" id="cd18080">
    <property type="entry name" value="TrmD-like"/>
    <property type="match status" value="1"/>
</dbReference>
<dbReference type="FunFam" id="1.10.1270.20:FF:000001">
    <property type="entry name" value="tRNA (guanine-N(1)-)-methyltransferase"/>
    <property type="match status" value="1"/>
</dbReference>
<dbReference type="FunFam" id="3.40.1280.10:FF:000001">
    <property type="entry name" value="tRNA (guanine-N(1)-)-methyltransferase"/>
    <property type="match status" value="1"/>
</dbReference>
<dbReference type="Gene3D" id="3.40.1280.10">
    <property type="match status" value="1"/>
</dbReference>
<dbReference type="Gene3D" id="1.10.1270.20">
    <property type="entry name" value="tRNA(m1g37)methyltransferase, domain 2"/>
    <property type="match status" value="1"/>
</dbReference>
<dbReference type="HAMAP" id="MF_00605">
    <property type="entry name" value="TrmD"/>
    <property type="match status" value="1"/>
</dbReference>
<dbReference type="InterPro" id="IPR029028">
    <property type="entry name" value="Alpha/beta_knot_MTases"/>
</dbReference>
<dbReference type="InterPro" id="IPR023148">
    <property type="entry name" value="tRNA_m1G_MeTrfase_C_sf"/>
</dbReference>
<dbReference type="InterPro" id="IPR002649">
    <property type="entry name" value="tRNA_m1G_MeTrfase_TrmD"/>
</dbReference>
<dbReference type="InterPro" id="IPR029026">
    <property type="entry name" value="tRNA_m1G_MTases_N"/>
</dbReference>
<dbReference type="InterPro" id="IPR016009">
    <property type="entry name" value="tRNA_MeTrfase_TRMD/TRM10"/>
</dbReference>
<dbReference type="NCBIfam" id="NF000648">
    <property type="entry name" value="PRK00026.1"/>
    <property type="match status" value="1"/>
</dbReference>
<dbReference type="NCBIfam" id="TIGR00088">
    <property type="entry name" value="trmD"/>
    <property type="match status" value="1"/>
</dbReference>
<dbReference type="PANTHER" id="PTHR46417">
    <property type="entry name" value="TRNA (GUANINE-N(1)-)-METHYLTRANSFERASE"/>
    <property type="match status" value="1"/>
</dbReference>
<dbReference type="PANTHER" id="PTHR46417:SF1">
    <property type="entry name" value="TRNA (GUANINE-N(1)-)-METHYLTRANSFERASE"/>
    <property type="match status" value="1"/>
</dbReference>
<dbReference type="Pfam" id="PF01746">
    <property type="entry name" value="tRNA_m1G_MT"/>
    <property type="match status" value="1"/>
</dbReference>
<dbReference type="PIRSF" id="PIRSF000386">
    <property type="entry name" value="tRNA_mtase"/>
    <property type="match status" value="1"/>
</dbReference>
<dbReference type="SUPFAM" id="SSF75217">
    <property type="entry name" value="alpha/beta knot"/>
    <property type="match status" value="1"/>
</dbReference>
<keyword id="KW-0963">Cytoplasm</keyword>
<keyword id="KW-0489">Methyltransferase</keyword>
<keyword id="KW-0949">S-adenosyl-L-methionine</keyword>
<keyword id="KW-0808">Transferase</keyword>
<keyword id="KW-0819">tRNA processing</keyword>